<reference key="1">
    <citation type="journal article" date="2002" name="Proc. Natl. Acad. Sci. U.S.A.">
        <title>The complete genome sequence of Chlorobium tepidum TLS, a photosynthetic, anaerobic, green-sulfur bacterium.</title>
        <authorList>
            <person name="Eisen J.A."/>
            <person name="Nelson K.E."/>
            <person name="Paulsen I.T."/>
            <person name="Heidelberg J.F."/>
            <person name="Wu M."/>
            <person name="Dodson R.J."/>
            <person name="DeBoy R.T."/>
            <person name="Gwinn M.L."/>
            <person name="Nelson W.C."/>
            <person name="Haft D.H."/>
            <person name="Hickey E.K."/>
            <person name="Peterson J.D."/>
            <person name="Durkin A.S."/>
            <person name="Kolonay J.F."/>
            <person name="Yang F."/>
            <person name="Holt I.E."/>
            <person name="Umayam L.A."/>
            <person name="Mason T.M."/>
            <person name="Brenner M."/>
            <person name="Shea T.P."/>
            <person name="Parksey D.S."/>
            <person name="Nierman W.C."/>
            <person name="Feldblyum T.V."/>
            <person name="Hansen C.L."/>
            <person name="Craven M.B."/>
            <person name="Radune D."/>
            <person name="Vamathevan J.J."/>
            <person name="Khouri H.M."/>
            <person name="White O."/>
            <person name="Gruber T.M."/>
            <person name="Ketchum K.A."/>
            <person name="Venter J.C."/>
            <person name="Tettelin H."/>
            <person name="Bryant D.A."/>
            <person name="Fraser C.M."/>
        </authorList>
    </citation>
    <scope>NUCLEOTIDE SEQUENCE [LARGE SCALE GENOMIC DNA]</scope>
    <source>
        <strain>ATCC 49652 / DSM 12025 / NBRC 103806 / TLS</strain>
    </source>
</reference>
<sequence length="289" mass="32930">MQPPKTHNHIELAFEIDSDLYELYIAVLSQVGIEYFLEDDHKLLAYLPESDWNADKEASINIMLQETFGSVPRFTASFMADRNWNAEWEAHLQPVEISDRFLIIQHQKEYDVKPGQIVIAINPKMSFGTGYHATTRLMLRQMEELDLADKKIMDIGTGTGVLAIAARKLGNRNPILAFDNNAWAAENAVENVAENDVADIRVELLDAEEELAATLEEGYDLILANINKNVLDRILPTIRRHAPNAQVLLSGVLVYDEPWLKQLLKRIKYTNVKTIYEDEWLSALVEPKN</sequence>
<accession>Q8KG70</accession>
<keyword id="KW-0963">Cytoplasm</keyword>
<keyword id="KW-0489">Methyltransferase</keyword>
<keyword id="KW-1185">Reference proteome</keyword>
<keyword id="KW-0949">S-adenosyl-L-methionine</keyword>
<keyword id="KW-0808">Transferase</keyword>
<organism>
    <name type="scientific">Chlorobaculum tepidum (strain ATCC 49652 / DSM 12025 / NBRC 103806 / TLS)</name>
    <name type="common">Chlorobium tepidum</name>
    <dbReference type="NCBI Taxonomy" id="194439"/>
    <lineage>
        <taxon>Bacteria</taxon>
        <taxon>Pseudomonadati</taxon>
        <taxon>Chlorobiota</taxon>
        <taxon>Chlorobiia</taxon>
        <taxon>Chlorobiales</taxon>
        <taxon>Chlorobiaceae</taxon>
        <taxon>Chlorobaculum</taxon>
    </lineage>
</organism>
<protein>
    <recommendedName>
        <fullName evidence="1">Ribosomal protein L11 methyltransferase</fullName>
        <shortName evidence="1">L11 Mtase</shortName>
        <ecNumber evidence="1">2.1.1.-</ecNumber>
    </recommendedName>
</protein>
<comment type="function">
    <text evidence="1">Methylates ribosomal protein L11.</text>
</comment>
<comment type="catalytic activity">
    <reaction evidence="1">
        <text>L-lysyl-[protein] + 3 S-adenosyl-L-methionine = N(6),N(6),N(6)-trimethyl-L-lysyl-[protein] + 3 S-adenosyl-L-homocysteine + 3 H(+)</text>
        <dbReference type="Rhea" id="RHEA:54192"/>
        <dbReference type="Rhea" id="RHEA-COMP:9752"/>
        <dbReference type="Rhea" id="RHEA-COMP:13826"/>
        <dbReference type="ChEBI" id="CHEBI:15378"/>
        <dbReference type="ChEBI" id="CHEBI:29969"/>
        <dbReference type="ChEBI" id="CHEBI:57856"/>
        <dbReference type="ChEBI" id="CHEBI:59789"/>
        <dbReference type="ChEBI" id="CHEBI:61961"/>
    </reaction>
</comment>
<comment type="subcellular location">
    <subcellularLocation>
        <location evidence="1">Cytoplasm</location>
    </subcellularLocation>
</comment>
<comment type="similarity">
    <text evidence="1">Belongs to the methyltransferase superfamily. PrmA family.</text>
</comment>
<name>PRMA_CHLTE</name>
<proteinExistence type="inferred from homology"/>
<feature type="chain" id="PRO_0000192250" description="Ribosomal protein L11 methyltransferase">
    <location>
        <begin position="1"/>
        <end position="289"/>
    </location>
</feature>
<feature type="binding site" evidence="1">
    <location>
        <position position="135"/>
    </location>
    <ligand>
        <name>S-adenosyl-L-methionine</name>
        <dbReference type="ChEBI" id="CHEBI:59789"/>
    </ligand>
</feature>
<feature type="binding site" evidence="1">
    <location>
        <position position="156"/>
    </location>
    <ligand>
        <name>S-adenosyl-L-methionine</name>
        <dbReference type="ChEBI" id="CHEBI:59789"/>
    </ligand>
</feature>
<feature type="binding site" evidence="1">
    <location>
        <position position="179"/>
    </location>
    <ligand>
        <name>S-adenosyl-L-methionine</name>
        <dbReference type="ChEBI" id="CHEBI:59789"/>
    </ligand>
</feature>
<feature type="binding site" evidence="1">
    <location>
        <position position="225"/>
    </location>
    <ligand>
        <name>S-adenosyl-L-methionine</name>
        <dbReference type="ChEBI" id="CHEBI:59789"/>
    </ligand>
</feature>
<dbReference type="EC" id="2.1.1.-" evidence="1"/>
<dbReference type="EMBL" id="AE006470">
    <property type="protein sequence ID" value="AAM71346.1"/>
    <property type="molecule type" value="Genomic_DNA"/>
</dbReference>
<dbReference type="RefSeq" id="NP_661004.1">
    <property type="nucleotide sequence ID" value="NC_002932.3"/>
</dbReference>
<dbReference type="RefSeq" id="WP_010931792.1">
    <property type="nucleotide sequence ID" value="NC_002932.3"/>
</dbReference>
<dbReference type="SMR" id="Q8KG70"/>
<dbReference type="STRING" id="194439.CT0098"/>
<dbReference type="EnsemblBacteria" id="AAM71346">
    <property type="protein sequence ID" value="AAM71346"/>
    <property type="gene ID" value="CT0098"/>
</dbReference>
<dbReference type="KEGG" id="cte:CT0098"/>
<dbReference type="PATRIC" id="fig|194439.7.peg.98"/>
<dbReference type="eggNOG" id="COG2264">
    <property type="taxonomic scope" value="Bacteria"/>
</dbReference>
<dbReference type="HOGENOM" id="CLU_049382_0_0_10"/>
<dbReference type="OrthoDB" id="9785995at2"/>
<dbReference type="Proteomes" id="UP000001007">
    <property type="component" value="Chromosome"/>
</dbReference>
<dbReference type="GO" id="GO:0005737">
    <property type="term" value="C:cytoplasm"/>
    <property type="evidence" value="ECO:0007669"/>
    <property type="project" value="UniProtKB-SubCell"/>
</dbReference>
<dbReference type="GO" id="GO:0016279">
    <property type="term" value="F:protein-lysine N-methyltransferase activity"/>
    <property type="evidence" value="ECO:0007669"/>
    <property type="project" value="RHEA"/>
</dbReference>
<dbReference type="GO" id="GO:0032259">
    <property type="term" value="P:methylation"/>
    <property type="evidence" value="ECO:0007669"/>
    <property type="project" value="UniProtKB-KW"/>
</dbReference>
<dbReference type="CDD" id="cd02440">
    <property type="entry name" value="AdoMet_MTases"/>
    <property type="match status" value="1"/>
</dbReference>
<dbReference type="Gene3D" id="3.40.50.150">
    <property type="entry name" value="Vaccinia Virus protein VP39"/>
    <property type="match status" value="1"/>
</dbReference>
<dbReference type="HAMAP" id="MF_00735">
    <property type="entry name" value="Methyltr_PrmA"/>
    <property type="match status" value="1"/>
</dbReference>
<dbReference type="InterPro" id="IPR050078">
    <property type="entry name" value="Ribosomal_L11_MeTrfase_PrmA"/>
</dbReference>
<dbReference type="InterPro" id="IPR004498">
    <property type="entry name" value="Ribosomal_PrmA_MeTrfase"/>
</dbReference>
<dbReference type="InterPro" id="IPR029063">
    <property type="entry name" value="SAM-dependent_MTases_sf"/>
</dbReference>
<dbReference type="NCBIfam" id="NF001785">
    <property type="entry name" value="PRK00517.2-2"/>
    <property type="match status" value="1"/>
</dbReference>
<dbReference type="PANTHER" id="PTHR43648">
    <property type="entry name" value="ELECTRON TRANSFER FLAVOPROTEIN BETA SUBUNIT LYSINE METHYLTRANSFERASE"/>
    <property type="match status" value="1"/>
</dbReference>
<dbReference type="PANTHER" id="PTHR43648:SF1">
    <property type="entry name" value="ELECTRON TRANSFER FLAVOPROTEIN BETA SUBUNIT LYSINE METHYLTRANSFERASE"/>
    <property type="match status" value="1"/>
</dbReference>
<dbReference type="Pfam" id="PF06325">
    <property type="entry name" value="PrmA"/>
    <property type="match status" value="1"/>
</dbReference>
<dbReference type="PIRSF" id="PIRSF000401">
    <property type="entry name" value="RPL11_MTase"/>
    <property type="match status" value="1"/>
</dbReference>
<dbReference type="SUPFAM" id="SSF53335">
    <property type="entry name" value="S-adenosyl-L-methionine-dependent methyltransferases"/>
    <property type="match status" value="1"/>
</dbReference>
<evidence type="ECO:0000255" key="1">
    <source>
        <dbReference type="HAMAP-Rule" id="MF_00735"/>
    </source>
</evidence>
<gene>
    <name evidence="1" type="primary">prmA</name>
    <name type="ordered locus">CT0098</name>
</gene>